<reference key="1">
    <citation type="journal article" date="2003" name="Fungal Genet. Biol.">
        <title>Characterization of phiA, a gene essential for phialide development in Aspergillus nidulans.</title>
        <authorList>
            <person name="Melin P."/>
            <person name="Schnuerer J."/>
            <person name="Wagner E.G."/>
        </authorList>
    </citation>
    <scope>NUCLEOTIDE SEQUENCE [GENOMIC DNA]</scope>
    <scope>DISRUPTION PHENOTYPE</scope>
    <scope>TISSUE SPECIFICITY</scope>
    <scope>FUNCTION</scope>
    <scope>INDUCTION</scope>
    <scope>SUBCELLULAR LOCATION</scope>
    <source>
        <strain>FGSC A4 / ATCC 38163 / CBS 112.46 / NRRL 194 / M139</strain>
    </source>
</reference>
<reference key="2">
    <citation type="journal article" date="2005" name="Nature">
        <title>Sequencing of Aspergillus nidulans and comparative analysis with A. fumigatus and A. oryzae.</title>
        <authorList>
            <person name="Galagan J.E."/>
            <person name="Calvo S.E."/>
            <person name="Cuomo C."/>
            <person name="Ma L.-J."/>
            <person name="Wortman J.R."/>
            <person name="Batzoglou S."/>
            <person name="Lee S.-I."/>
            <person name="Bastuerkmen M."/>
            <person name="Spevak C.C."/>
            <person name="Clutterbuck J."/>
            <person name="Kapitonov V."/>
            <person name="Jurka J."/>
            <person name="Scazzocchio C."/>
            <person name="Farman M.L."/>
            <person name="Butler J."/>
            <person name="Purcell S."/>
            <person name="Harris S."/>
            <person name="Braus G.H."/>
            <person name="Draht O."/>
            <person name="Busch S."/>
            <person name="D'Enfert C."/>
            <person name="Bouchier C."/>
            <person name="Goldman G.H."/>
            <person name="Bell-Pedersen D."/>
            <person name="Griffiths-Jones S."/>
            <person name="Doonan J.H."/>
            <person name="Yu J."/>
            <person name="Vienken K."/>
            <person name="Pain A."/>
            <person name="Freitag M."/>
            <person name="Selker E.U."/>
            <person name="Archer D.B."/>
            <person name="Penalva M.A."/>
            <person name="Oakley B.R."/>
            <person name="Momany M."/>
            <person name="Tanaka T."/>
            <person name="Kumagai T."/>
            <person name="Asai K."/>
            <person name="Machida M."/>
            <person name="Nierman W.C."/>
            <person name="Denning D.W."/>
            <person name="Caddick M.X."/>
            <person name="Hynes M."/>
            <person name="Paoletti M."/>
            <person name="Fischer R."/>
            <person name="Miller B.L."/>
            <person name="Dyer P.S."/>
            <person name="Sachs M.S."/>
            <person name="Osmani S.A."/>
            <person name="Birren B.W."/>
        </authorList>
    </citation>
    <scope>NUCLEOTIDE SEQUENCE [LARGE SCALE GENOMIC DNA]</scope>
    <source>
        <strain>FGSC A4 / ATCC 38163 / CBS 112.46 / NRRL 194 / M139</strain>
    </source>
</reference>
<reference key="3">
    <citation type="journal article" date="2009" name="Fungal Genet. Biol.">
        <title>The 2008 update of the Aspergillus nidulans genome annotation: a community effort.</title>
        <authorList>
            <person name="Wortman J.R."/>
            <person name="Gilsenan J.M."/>
            <person name="Joardar V."/>
            <person name="Deegan J."/>
            <person name="Clutterbuck J."/>
            <person name="Andersen M.R."/>
            <person name="Archer D."/>
            <person name="Bencina M."/>
            <person name="Braus G."/>
            <person name="Coutinho P."/>
            <person name="von Dohren H."/>
            <person name="Doonan J."/>
            <person name="Driessen A.J."/>
            <person name="Durek P."/>
            <person name="Espeso E."/>
            <person name="Fekete E."/>
            <person name="Flipphi M."/>
            <person name="Estrada C.G."/>
            <person name="Geysens S."/>
            <person name="Goldman G."/>
            <person name="de Groot P.W."/>
            <person name="Hansen K."/>
            <person name="Harris S.D."/>
            <person name="Heinekamp T."/>
            <person name="Helmstaedt K."/>
            <person name="Henrissat B."/>
            <person name="Hofmann G."/>
            <person name="Homan T."/>
            <person name="Horio T."/>
            <person name="Horiuchi H."/>
            <person name="James S."/>
            <person name="Jones M."/>
            <person name="Karaffa L."/>
            <person name="Karanyi Z."/>
            <person name="Kato M."/>
            <person name="Keller N."/>
            <person name="Kelly D.E."/>
            <person name="Kiel J.A."/>
            <person name="Kim J.M."/>
            <person name="van der Klei I.J."/>
            <person name="Klis F.M."/>
            <person name="Kovalchuk A."/>
            <person name="Krasevec N."/>
            <person name="Kubicek C.P."/>
            <person name="Liu B."/>
            <person name="Maccabe A."/>
            <person name="Meyer V."/>
            <person name="Mirabito P."/>
            <person name="Miskei M."/>
            <person name="Mos M."/>
            <person name="Mullins J."/>
            <person name="Nelson D.R."/>
            <person name="Nielsen J."/>
            <person name="Oakley B.R."/>
            <person name="Osmani S.A."/>
            <person name="Pakula T."/>
            <person name="Paszewski A."/>
            <person name="Paulsen I."/>
            <person name="Pilsyk S."/>
            <person name="Pocsi I."/>
            <person name="Punt P.J."/>
            <person name="Ram A.F."/>
            <person name="Ren Q."/>
            <person name="Robellet X."/>
            <person name="Robson G."/>
            <person name="Seiboth B."/>
            <person name="van Solingen P."/>
            <person name="Specht T."/>
            <person name="Sun J."/>
            <person name="Taheri-Talesh N."/>
            <person name="Takeshita N."/>
            <person name="Ussery D."/>
            <person name="vanKuyk P.A."/>
            <person name="Visser H."/>
            <person name="van de Vondervoort P.J."/>
            <person name="de Vries R.P."/>
            <person name="Walton J."/>
            <person name="Xiang X."/>
            <person name="Xiong Y."/>
            <person name="Zeng A.P."/>
            <person name="Brandt B.W."/>
            <person name="Cornell M.J."/>
            <person name="van den Hondel C.A."/>
            <person name="Visser J."/>
            <person name="Oliver S.G."/>
            <person name="Turner G."/>
        </authorList>
    </citation>
    <scope>GENOME REANNOTATION</scope>
    <source>
        <strain>FGSC A4 / ATCC 38163 / CBS 112.46 / NRRL 194 / M139</strain>
    </source>
</reference>
<reference key="4">
    <citation type="journal article" date="1999" name="Microbiology">
        <title>Changes in Aspergillus nidulans gene expression induced by bafilomycin, a Streptomyces-produced antibiotic.</title>
        <authorList>
            <person name="Melin P."/>
            <person name="Schnuerer J."/>
            <person name="Wagner E.G."/>
        </authorList>
    </citation>
    <scope>INDUCTION</scope>
</reference>
<reference key="5">
    <citation type="journal article" date="2002" name="Mol. Genet. Genomics">
        <title>Proteome analysis of Aspergillus nidulans reveals proteins associated with the response to the antibiotic concanamycin A, produced by Streptomyces species.</title>
        <authorList>
            <person name="Melin P."/>
            <person name="Schnuerer J."/>
            <person name="Wagner E.G.H."/>
        </authorList>
    </citation>
    <scope>INDUCTION</scope>
</reference>
<gene>
    <name evidence="9" type="primary">phiA</name>
    <name evidence="8" type="synonym">binB</name>
    <name type="ORF">ANIA_08333</name>
</gene>
<evidence type="ECO:0000250" key="1">
    <source>
        <dbReference type="UniProtKB" id="A2R2S8"/>
    </source>
</evidence>
<evidence type="ECO:0000250" key="2">
    <source>
        <dbReference type="UniProtKB" id="D4AV66"/>
    </source>
</evidence>
<evidence type="ECO:0000255" key="3"/>
<evidence type="ECO:0000255" key="4">
    <source>
        <dbReference type="PROSITE-ProRule" id="PRU00498"/>
    </source>
</evidence>
<evidence type="ECO:0000269" key="5">
    <source>
    </source>
</evidence>
<evidence type="ECO:0000269" key="6">
    <source>
    </source>
</evidence>
<evidence type="ECO:0000269" key="7">
    <source>
    </source>
</evidence>
<evidence type="ECO:0000303" key="8">
    <source>
    </source>
</evidence>
<evidence type="ECO:0000303" key="9">
    <source>
    </source>
</evidence>
<evidence type="ECO:0000305" key="10"/>
<sequence length="182" mass="18770">MKLTSTAALASLAVAATAAPSTPETFGLVAIRSGDAVQYAGFNAALGSIFAGLPKQNATCEGTDSGFATFYIKDGALYLYGSEETQEIYVDRSGMGQGLIGYTTGDNASGPRNSERTGWSIDENNHLVFDGNSLIACPNSIDSAYSIWASAGVANPGGNKDCVGIAARVEKTENPIACTYSS</sequence>
<accession>Q5ATP7</accession>
<accession>C8VE25</accession>
<accession>Q8J1V2</accession>
<feature type="signal peptide" evidence="3">
    <location>
        <begin position="1"/>
        <end position="18"/>
    </location>
</feature>
<feature type="chain" id="PRO_0000434419" description="Cell wall protein phiA" evidence="3">
    <location>
        <begin position="19"/>
        <end position="182"/>
    </location>
</feature>
<feature type="glycosylation site" description="N-linked (GlcNAc...) asparagine" evidence="4">
    <location>
        <position position="57"/>
    </location>
</feature>
<feature type="glycosylation site" description="N-linked (GlcNAc...) asparagine" evidence="4">
    <location>
        <position position="107"/>
    </location>
</feature>
<feature type="sequence conflict" description="In Ref. 1; CAD54043." evidence="10" ref="1">
    <original>S</original>
    <variation>T</variation>
    <location>
        <position position="33"/>
    </location>
</feature>
<name>PHIA_EMENI</name>
<dbReference type="EMBL" id="AJ511280">
    <property type="protein sequence ID" value="CAD54043.1"/>
    <property type="molecule type" value="Genomic_DNA"/>
</dbReference>
<dbReference type="EMBL" id="BN001305">
    <property type="protein sequence ID" value="CBF80327.1"/>
    <property type="molecule type" value="Genomic_DNA"/>
</dbReference>
<dbReference type="EMBL" id="AACD01000150">
    <property type="protein sequence ID" value="EAA66956.1"/>
    <property type="molecule type" value="Genomic_DNA"/>
</dbReference>
<dbReference type="RefSeq" id="XP_681602.1">
    <property type="nucleotide sequence ID" value="XM_676510.1"/>
</dbReference>
<dbReference type="GlyCosmos" id="Q5ATP7">
    <property type="glycosylation" value="2 sites, No reported glycans"/>
</dbReference>
<dbReference type="EnsemblFungi" id="CBF80327">
    <property type="protein sequence ID" value="CBF80327"/>
    <property type="gene ID" value="ANIA_08333"/>
</dbReference>
<dbReference type="GeneID" id="2868754"/>
<dbReference type="KEGG" id="ani:ANIA_08333"/>
<dbReference type="VEuPathDB" id="FungiDB:AN8333"/>
<dbReference type="eggNOG" id="ENOG502SNZ2">
    <property type="taxonomic scope" value="Eukaryota"/>
</dbReference>
<dbReference type="HOGENOM" id="CLU_097238_0_0_1"/>
<dbReference type="InParanoid" id="Q5ATP7"/>
<dbReference type="OMA" id="WSIWADA"/>
<dbReference type="OrthoDB" id="4093325at2759"/>
<dbReference type="Proteomes" id="UP000000560">
    <property type="component" value="Chromosome V"/>
</dbReference>
<dbReference type="GO" id="GO:0005576">
    <property type="term" value="C:extracellular region"/>
    <property type="evidence" value="ECO:0000314"/>
    <property type="project" value="AspGD"/>
</dbReference>
<dbReference type="GO" id="GO:0070787">
    <property type="term" value="P:conidiophore development"/>
    <property type="evidence" value="ECO:0000315"/>
    <property type="project" value="AspGD"/>
</dbReference>
<dbReference type="GO" id="GO:0070790">
    <property type="term" value="P:phialide development"/>
    <property type="evidence" value="ECO:0000315"/>
    <property type="project" value="AspGD"/>
</dbReference>
<dbReference type="GO" id="GO:0043935">
    <property type="term" value="P:sexual sporulation resulting in formation of a cellular spore"/>
    <property type="evidence" value="ECO:0000315"/>
    <property type="project" value="AspGD"/>
</dbReference>
<dbReference type="GO" id="GO:0000905">
    <property type="term" value="P:sporocarp development involved in asexual reproduction"/>
    <property type="evidence" value="ECO:0000315"/>
    <property type="project" value="AspGD"/>
</dbReference>
<organism>
    <name type="scientific">Emericella nidulans (strain FGSC A4 / ATCC 38163 / CBS 112.46 / NRRL 194 / M139)</name>
    <name type="common">Aspergillus nidulans</name>
    <dbReference type="NCBI Taxonomy" id="227321"/>
    <lineage>
        <taxon>Eukaryota</taxon>
        <taxon>Fungi</taxon>
        <taxon>Dikarya</taxon>
        <taxon>Ascomycota</taxon>
        <taxon>Pezizomycotina</taxon>
        <taxon>Eurotiomycetes</taxon>
        <taxon>Eurotiomycetidae</taxon>
        <taxon>Eurotiales</taxon>
        <taxon>Aspergillaceae</taxon>
        <taxon>Aspergillus</taxon>
        <taxon>Aspergillus subgen. Nidulantes</taxon>
    </lineage>
</organism>
<protein>
    <recommendedName>
        <fullName evidence="10">Cell wall protein phiA</fullName>
    </recommendedName>
    <alternativeName>
        <fullName evidence="8">Bafilomycin-induced protein B</fullName>
    </alternativeName>
    <alternativeName>
        <fullName evidence="9">Phialide development protein A</fullName>
    </alternativeName>
</protein>
<keyword id="KW-0134">Cell wall</keyword>
<keyword id="KW-0325">Glycoprotein</keyword>
<keyword id="KW-1185">Reference proteome</keyword>
<keyword id="KW-0964">Secreted</keyword>
<keyword id="KW-0732">Signal</keyword>
<keyword id="KW-0749">Sporulation</keyword>
<comment type="function">
    <text evidence="1 7">Cell wall protein involved in development of asexual structures such as phialide and conidium development, and thus required for spore formation (PubMed:14599891). Plays a role as a general stress protectant produced by the fungus in competition with antagonistic bacteria (By similarity).</text>
</comment>
<comment type="subcellular location">
    <subcellularLocation>
        <location evidence="2">Secreted</location>
    </subcellularLocation>
    <subcellularLocation>
        <location evidence="7">Secreted</location>
        <location evidence="7">Cell wall</location>
    </subcellularLocation>
</comment>
<comment type="tissue specificity">
    <text evidence="7">Mainly present in phialides and conidia.</text>
</comment>
<comment type="induction">
    <text evidence="5 6 7">Expression is highly induced by the V-ATPase inhibitor bafilomycin B1 and by oncanamycin A (PubMed:10376827, PubMed:12207217). The promoter contains two abaA ATTS DNA binding motifs (PubMed:14599891).</text>
</comment>
<comment type="disruption phenotype">
    <text evidence="7">Leads to reduced sporulation and division of phialides instead of forming a single flask-shaped cell.</text>
</comment>
<comment type="similarity">
    <text evidence="10">Belongs to the phiA family.</text>
</comment>
<proteinExistence type="evidence at transcript level"/>